<dbReference type="EC" id="2.5.1.145" evidence="1"/>
<dbReference type="EMBL" id="CP000758">
    <property type="protein sequence ID" value="ABS14355.1"/>
    <property type="molecule type" value="Genomic_DNA"/>
</dbReference>
<dbReference type="RefSeq" id="WP_012091670.1">
    <property type="nucleotide sequence ID" value="NC_009667.1"/>
</dbReference>
<dbReference type="SMR" id="A6WZF1"/>
<dbReference type="STRING" id="439375.Oant_1639"/>
<dbReference type="KEGG" id="oan:Oant_1639"/>
<dbReference type="PATRIC" id="fig|439375.7.peg.1727"/>
<dbReference type="eggNOG" id="COG0682">
    <property type="taxonomic scope" value="Bacteria"/>
</dbReference>
<dbReference type="HOGENOM" id="CLU_013386_1_0_5"/>
<dbReference type="PhylomeDB" id="A6WZF1"/>
<dbReference type="UniPathway" id="UPA00664"/>
<dbReference type="Proteomes" id="UP000002301">
    <property type="component" value="Chromosome 1"/>
</dbReference>
<dbReference type="GO" id="GO:0005886">
    <property type="term" value="C:plasma membrane"/>
    <property type="evidence" value="ECO:0007669"/>
    <property type="project" value="UniProtKB-SubCell"/>
</dbReference>
<dbReference type="GO" id="GO:0008961">
    <property type="term" value="F:phosphatidylglycerol-prolipoprotein diacylglyceryl transferase activity"/>
    <property type="evidence" value="ECO:0007669"/>
    <property type="project" value="UniProtKB-UniRule"/>
</dbReference>
<dbReference type="GO" id="GO:0042158">
    <property type="term" value="P:lipoprotein biosynthetic process"/>
    <property type="evidence" value="ECO:0007669"/>
    <property type="project" value="UniProtKB-UniRule"/>
</dbReference>
<dbReference type="HAMAP" id="MF_01147">
    <property type="entry name" value="Lgt"/>
    <property type="match status" value="1"/>
</dbReference>
<dbReference type="InterPro" id="IPR001640">
    <property type="entry name" value="Lgt"/>
</dbReference>
<dbReference type="NCBIfam" id="TIGR00544">
    <property type="entry name" value="lgt"/>
    <property type="match status" value="1"/>
</dbReference>
<dbReference type="PANTHER" id="PTHR30589:SF0">
    <property type="entry name" value="PHOSPHATIDYLGLYCEROL--PROLIPOPROTEIN DIACYLGLYCERYL TRANSFERASE"/>
    <property type="match status" value="1"/>
</dbReference>
<dbReference type="PANTHER" id="PTHR30589">
    <property type="entry name" value="PROLIPOPROTEIN DIACYLGLYCERYL TRANSFERASE"/>
    <property type="match status" value="1"/>
</dbReference>
<dbReference type="Pfam" id="PF01790">
    <property type="entry name" value="LGT"/>
    <property type="match status" value="1"/>
</dbReference>
<evidence type="ECO:0000255" key="1">
    <source>
        <dbReference type="HAMAP-Rule" id="MF_01147"/>
    </source>
</evidence>
<comment type="function">
    <text evidence="1">Catalyzes the transfer of the diacylglyceryl group from phosphatidylglycerol to the sulfhydryl group of the N-terminal cysteine of a prolipoprotein, the first step in the formation of mature lipoproteins.</text>
</comment>
<comment type="catalytic activity">
    <reaction evidence="1">
        <text>L-cysteinyl-[prolipoprotein] + a 1,2-diacyl-sn-glycero-3-phospho-(1'-sn-glycerol) = an S-1,2-diacyl-sn-glyceryl-L-cysteinyl-[prolipoprotein] + sn-glycerol 1-phosphate + H(+)</text>
        <dbReference type="Rhea" id="RHEA:56712"/>
        <dbReference type="Rhea" id="RHEA-COMP:14679"/>
        <dbReference type="Rhea" id="RHEA-COMP:14680"/>
        <dbReference type="ChEBI" id="CHEBI:15378"/>
        <dbReference type="ChEBI" id="CHEBI:29950"/>
        <dbReference type="ChEBI" id="CHEBI:57685"/>
        <dbReference type="ChEBI" id="CHEBI:64716"/>
        <dbReference type="ChEBI" id="CHEBI:140658"/>
        <dbReference type="EC" id="2.5.1.145"/>
    </reaction>
</comment>
<comment type="pathway">
    <text evidence="1">Protein modification; lipoprotein biosynthesis (diacylglyceryl transfer).</text>
</comment>
<comment type="subcellular location">
    <subcellularLocation>
        <location evidence="1">Cell inner membrane</location>
        <topology evidence="1">Multi-pass membrane protein</topology>
    </subcellularLocation>
</comment>
<comment type="similarity">
    <text evidence="1">Belongs to the Lgt family.</text>
</comment>
<reference key="1">
    <citation type="journal article" date="2011" name="J. Bacteriol.">
        <title>Genome of Ochrobactrum anthropi ATCC 49188 T, a versatile opportunistic pathogen and symbiont of several eukaryotic hosts.</title>
        <authorList>
            <person name="Chain P.S."/>
            <person name="Lang D.M."/>
            <person name="Comerci D.J."/>
            <person name="Malfatti S.A."/>
            <person name="Vergez L.M."/>
            <person name="Shin M."/>
            <person name="Ugalde R.A."/>
            <person name="Garcia E."/>
            <person name="Tolmasky M.E."/>
        </authorList>
    </citation>
    <scope>NUCLEOTIDE SEQUENCE [LARGE SCALE GENOMIC DNA]</scope>
    <source>
        <strain>ATCC 49188 / DSM 6882 / CCUG 24695 / JCM 21032 / LMG 3331 / NBRC 15819 / NCTC 12168 / Alc 37</strain>
    </source>
</reference>
<protein>
    <recommendedName>
        <fullName evidence="1">Phosphatidylglycerol--prolipoprotein diacylglyceryl transferase</fullName>
        <ecNumber evidence="1">2.5.1.145</ecNumber>
    </recommendedName>
</protein>
<sequence>MIETLLPASALAFPNIDPVIFRVGPLAVHWYGLGYVVGIMFAWWYGKKLLRSHRLWANNQPPMAPEALDDFVIWAALGVVLGGRIGYVLFYNFSYYISNPLAIPAVWDGGMSFHGGILGTTLAMILFARSRGIKVWSMFDTIAAGVPVGLGVVRVANFINSELWGRVSDVPWAVYFPNGGPLPRHPSQLYEAFLEGVVLFFVLFLLVWVGRKLKKPGFIAGAFVTGYGLSRIVVEFFREPDAQLGYLFGGWLTMGMVLSVPMVLIGLWAMWRANRTAAKDA</sequence>
<proteinExistence type="inferred from homology"/>
<feature type="chain" id="PRO_1000053462" description="Phosphatidylglycerol--prolipoprotein diacylglyceryl transferase">
    <location>
        <begin position="1"/>
        <end position="281"/>
    </location>
</feature>
<feature type="transmembrane region" description="Helical" evidence="1">
    <location>
        <begin position="23"/>
        <end position="43"/>
    </location>
</feature>
<feature type="transmembrane region" description="Helical" evidence="1">
    <location>
        <begin position="71"/>
        <end position="91"/>
    </location>
</feature>
<feature type="transmembrane region" description="Helical" evidence="1">
    <location>
        <begin position="107"/>
        <end position="127"/>
    </location>
</feature>
<feature type="transmembrane region" description="Helical" evidence="1">
    <location>
        <begin position="133"/>
        <end position="153"/>
    </location>
</feature>
<feature type="transmembrane region" description="Helical" evidence="1">
    <location>
        <begin position="189"/>
        <end position="209"/>
    </location>
</feature>
<feature type="transmembrane region" description="Helical" evidence="1">
    <location>
        <begin position="217"/>
        <end position="237"/>
    </location>
</feature>
<feature type="transmembrane region" description="Helical" evidence="1">
    <location>
        <begin position="247"/>
        <end position="267"/>
    </location>
</feature>
<feature type="binding site" evidence="1">
    <location>
        <position position="154"/>
    </location>
    <ligand>
        <name>a 1,2-diacyl-sn-glycero-3-phospho-(1'-sn-glycerol)</name>
        <dbReference type="ChEBI" id="CHEBI:64716"/>
    </ligand>
</feature>
<organism>
    <name type="scientific">Brucella anthropi (strain ATCC 49188 / DSM 6882 / CCUG 24695 / JCM 21032 / LMG 3331 / NBRC 15819 / NCTC 12168 / Alc 37)</name>
    <name type="common">Ochrobactrum anthropi</name>
    <dbReference type="NCBI Taxonomy" id="439375"/>
    <lineage>
        <taxon>Bacteria</taxon>
        <taxon>Pseudomonadati</taxon>
        <taxon>Pseudomonadota</taxon>
        <taxon>Alphaproteobacteria</taxon>
        <taxon>Hyphomicrobiales</taxon>
        <taxon>Brucellaceae</taxon>
        <taxon>Brucella/Ochrobactrum group</taxon>
        <taxon>Brucella</taxon>
    </lineage>
</organism>
<gene>
    <name evidence="1" type="primary">lgt</name>
    <name type="ordered locus">Oant_1639</name>
</gene>
<keyword id="KW-0997">Cell inner membrane</keyword>
<keyword id="KW-1003">Cell membrane</keyword>
<keyword id="KW-0472">Membrane</keyword>
<keyword id="KW-1185">Reference proteome</keyword>
<keyword id="KW-0808">Transferase</keyword>
<keyword id="KW-0812">Transmembrane</keyword>
<keyword id="KW-1133">Transmembrane helix</keyword>
<name>LGT_BRUA4</name>
<accession>A6WZF1</accession>